<comment type="function">
    <text>Replicase polyprotein contains helicase, VPg, protease and RNA-directed RNA polymerase functions.</text>
</comment>
<comment type="function">
    <text>RNA-directed RNA polymerase replicates genomic and antigenomic RNA and transcribes the vial genome.</text>
</comment>
<comment type="function">
    <text>The protease generates mature viral proteins from the precursor polyprotein.</text>
</comment>
<comment type="function">
    <text>VPg is covalently linked to the 5'-end of genomic RNA.</text>
</comment>
<comment type="catalytic activity">
    <reaction evidence="1">
        <text>RNA(n) + a ribonucleoside 5'-triphosphate = RNA(n+1) + diphosphate</text>
        <dbReference type="Rhea" id="RHEA:21248"/>
        <dbReference type="Rhea" id="RHEA-COMP:14527"/>
        <dbReference type="Rhea" id="RHEA-COMP:17342"/>
        <dbReference type="ChEBI" id="CHEBI:33019"/>
        <dbReference type="ChEBI" id="CHEBI:61557"/>
        <dbReference type="ChEBI" id="CHEBI:140395"/>
        <dbReference type="EC" id="2.7.7.48"/>
    </reaction>
</comment>
<comment type="PTM">
    <text evidence="4">Specific enzymatic cleavages in vivo by the viral protease yield a variety of precursors and mature proteins.</text>
</comment>
<sequence>MNFTKQPASLKYLSSMKLITSQDQDFFNFGEVSREFILEQAYVNGYDFHMLHQDMNCIGFVLSIFDEDARDEYEYKDLNCEYHENLFDAVVDSEFDKIWPHLVLKYITYYPCSLNWRGMPTIPIVYVSKHFWYELYRTGFLNKLYHCGSWTDILLLLSGDVETNPGPVETYKDLCRRKNIRKRKSRIREEIKMQQHIDKIIGQENEEYKIINVNMQGIFSFNEEKEIIKSTAWKFNSTLDKTNSIIDNLIPQLEETLAGFRKTYSKCESKIFGTISVVDVCVDLISALLQVSFAKPAMKIASLAVEVFRLIKKYVSNININIDKIKELLSYGKVALNNNNPIIHVTMQSNSPILEVLLQPNIIVSAIFIALSVVFHKKFTYKKLGIEAMIKRLGDLGRAAKGCSDLNVVLNQAITNHMLEHFGKNVLGLKQEDELKVLVEGYRNWCDEVRDLVGHKINSDGELDSKSIVENIMKDVYEIQRIENMYKKGLEISRNIAELKLPTKLTISFNTHMRYLTEVFKSVDTSGAFGNKPRTQPIVIWLFGESGRGKSGMTWPLAIDLNNSLLDNVDEMRNFSKNIYMRNVEQEFWDNYQGQNIVCXDDFGQMRDSSSNPNPEFMELIRTANIAPYPLHMAHLEDKRKTKFTSKVIIMTSNVFEQDVNSLTFPDAFRRRVDLCAEVKNKDEFTKMCWSKSAGKMVQRLDKGKVKKITGDIHSTVPYIVDLIDPESGEVYKTGLEYEEFLDMCLEKTSQCRDDSAKLNDFLMDYAEKRANRSREIDEVCARTMDEAFVDAYDDVIDVNMQIETVDEMELIEPNKLREMIEQCSNKIVYTYEGIAVKITSLAFKLATLNYEEQWEQIKEMKYYVKVSSGVNYLKRVLSQGMKVCEEWMKEMINYVKEHPWMTVSLILGTLIGILTVVGFWKWLCSGDKKKNPIKRHFINTGNVLILPDRELNTFWKNQESLDLRDMYINRVEEHIISLLKLQHKVVLVPKVTKYILTTVENHAKISDKIILITRNRYLNYQGKFVELICGEINQFFIDPETLDTNVEAFASADLKTFVQRKPIVIEGPEFVEAQTSGDQITLRKQTQKVIEAFASSDAITMARKTPKFVESDDVVEVSMQMWKDQVAQKLITNRVLTNLYKICLVKENGDMVPLLNGLFVRSNIMLAPGHLVGFLSDSDTIEIRNLFDVVFRVPWKDVKKVDVVNAFGESKEAVLLCFPKFVCQHTDLVKHFQDSESMSKFKRCEVTLPVLRYSDKMNRFLATLIECDKVEAYDRPYTLNDSSKGQYILRQGLEYTMPTTNGDCGAPLVINETQVIRKIAGIHVAGDARGKAYAESISQKDLIRAFSKIDVSMQIQLDLDQTLNFNQQQXIIPPNAEFGPEDLDFCDLPSLKMIPVGRLSEPLFEPGKTDIRPSLVYGKISEIKTKPAILRNVIVDGKIVNIKHKNLKKCAMDTPYVSKEMTEEAFQLVKSVWLKGMRNELKKVLTYEEAICGNDSSEFISAINRSSSPGFPWIRDRIKGTKGKQGWFGAEGEYILDEDVFEAVKTRIQNAKNGVRTPVMWVDTLKDERRPIEKVDQLKTRVFSNGPMDFSITFRMYYLGFIAHLMENRITNEVSIGTNVYSQDWNKTVRKLKTMGPKVIAGDFSTFDGSLNVCIMEKFADLANEFYDDGSENALIRHVLLMDVYNSTHICGDSVYMMTHSQPSGNPATTPLNCFINSMGLRMVFELCSKKYSALNGTKCYVMKDFSKHVSIVSYGDDNVINFSDEVSEWFNMETITEAFEKLGFTYTDELKGKNGEVPKWRTIEDVQYLKRKFRYDSKRKVWEAPLCMDTILEMPNWCRGSLDIQEGTKVNCENAIMELSMHEEYVFDKWSKVISKAYQKATGDCLDISTYNGYAQERFLNYYL</sequence>
<reference key="1">
    <citation type="journal article" date="2000" name="Virology">
        <title>Analysis of the complete genome sequence of acute bee paralysis virus shows that it belongs to the novel group of insect-infecting RNA viruses.</title>
        <authorList>
            <person name="Govan V.A."/>
            <person name="Leat N."/>
            <person name="Allsopp M."/>
            <person name="Davison S."/>
        </authorList>
    </citation>
    <scope>NUCLEOTIDE SEQUENCE [GENOMIC RNA]</scope>
</reference>
<organismHost>
    <name type="scientific">Apis mellifera</name>
    <name type="common">Honeybee</name>
    <dbReference type="NCBI Taxonomy" id="7460"/>
</organismHost>
<evidence type="ECO:0000255" key="1">
    <source>
        <dbReference type="PROSITE-ProRule" id="PRU00539"/>
    </source>
</evidence>
<evidence type="ECO:0000255" key="2">
    <source>
        <dbReference type="PROSITE-ProRule" id="PRU00551"/>
    </source>
</evidence>
<evidence type="ECO:0000255" key="3">
    <source>
        <dbReference type="PROSITE-ProRule" id="PRU01222"/>
    </source>
</evidence>
<evidence type="ECO:0000305" key="4"/>
<keyword id="KW-0067">ATP-binding</keyword>
<keyword id="KW-0378">Hydrolase</keyword>
<keyword id="KW-0547">Nucleotide-binding</keyword>
<keyword id="KW-0548">Nucleotidyltransferase</keyword>
<keyword id="KW-0645">Protease</keyword>
<keyword id="KW-1185">Reference proteome</keyword>
<keyword id="KW-0696">RNA-directed RNA polymerase</keyword>
<keyword id="KW-0788">Thiol protease</keyword>
<keyword id="KW-0808">Transferase</keyword>
<keyword id="KW-0693">Viral RNA replication</keyword>
<proteinExistence type="predicted"/>
<feature type="chain" id="PRO_0000423158" description="Replicase polyprotein">
    <location>
        <begin position="1"/>
        <end position="1906"/>
    </location>
</feature>
<feature type="domain" description="SF3 helicase" evidence="2">
    <location>
        <begin position="513"/>
        <end position="692"/>
    </location>
</feature>
<feature type="domain" description="Peptidase C3" evidence="3">
    <location>
        <begin position="1126"/>
        <end position="1343"/>
    </location>
</feature>
<feature type="domain" description="RdRp catalytic" evidence="1">
    <location>
        <begin position="1638"/>
        <end position="1772"/>
    </location>
</feature>
<feature type="region of interest" description="Protease">
    <location>
        <begin position="1124"/>
        <end position="1350"/>
    </location>
</feature>
<feature type="active site" description="For picornain 3C-like protease activity" evidence="3">
    <location>
        <position position="1171"/>
    </location>
</feature>
<feature type="active site" description="For picornain 3C-like protease activity" evidence="3">
    <location>
        <position position="1213"/>
    </location>
</feature>
<feature type="active site" description="For picornain 3C-like protease activity" evidence="3">
    <location>
        <position position="1305"/>
    </location>
</feature>
<feature type="binding site" evidence="2">
    <location>
        <begin position="544"/>
        <end position="551"/>
    </location>
    <ligand>
        <name>ATP</name>
        <dbReference type="ChEBI" id="CHEBI:30616"/>
    </ligand>
</feature>
<organism>
    <name type="scientific">Acute bee paralysis virus (strain Rothamsted)</name>
    <name type="common">ABPV</name>
    <dbReference type="NCBI Taxonomy" id="1217067"/>
    <lineage>
        <taxon>Viruses</taxon>
        <taxon>Riboviria</taxon>
        <taxon>Orthornavirae</taxon>
        <taxon>Pisuviricota</taxon>
        <taxon>Pisoniviricetes</taxon>
        <taxon>Picornavirales</taxon>
        <taxon>Dicistroviridae</taxon>
        <taxon>Aparavirus</taxon>
        <taxon>Aparavirus apisacutum</taxon>
    </lineage>
</organism>
<protein>
    <recommendedName>
        <fullName>Replicase polyprotein</fullName>
        <ecNumber>2.7.7.48</ecNumber>
        <ecNumber>3.4.22.-</ecNumber>
    </recommendedName>
</protein>
<accession>Q9DSN9</accession>
<gene>
    <name type="ORF">ORF1</name>
</gene>
<name>POLN_ABPVR</name>
<dbReference type="EC" id="2.7.7.48"/>
<dbReference type="EC" id="3.4.22.-"/>
<dbReference type="EMBL" id="AF150629">
    <property type="protein sequence ID" value="AAG13118.1"/>
    <property type="molecule type" value="Genomic_RNA"/>
</dbReference>
<dbReference type="RefSeq" id="NP_066241.1">
    <property type="nucleotide sequence ID" value="NC_002548.1"/>
</dbReference>
<dbReference type="KEGG" id="vg:911837"/>
<dbReference type="Proteomes" id="UP000006040">
    <property type="component" value="Segment"/>
</dbReference>
<dbReference type="GO" id="GO:0005524">
    <property type="term" value="F:ATP binding"/>
    <property type="evidence" value="ECO:0007669"/>
    <property type="project" value="UniProtKB-KW"/>
</dbReference>
<dbReference type="GO" id="GO:0004197">
    <property type="term" value="F:cysteine-type endopeptidase activity"/>
    <property type="evidence" value="ECO:0007669"/>
    <property type="project" value="InterPro"/>
</dbReference>
<dbReference type="GO" id="GO:0003723">
    <property type="term" value="F:RNA binding"/>
    <property type="evidence" value="ECO:0007669"/>
    <property type="project" value="InterPro"/>
</dbReference>
<dbReference type="GO" id="GO:0003724">
    <property type="term" value="F:RNA helicase activity"/>
    <property type="evidence" value="ECO:0007669"/>
    <property type="project" value="InterPro"/>
</dbReference>
<dbReference type="GO" id="GO:0003968">
    <property type="term" value="F:RNA-directed RNA polymerase activity"/>
    <property type="evidence" value="ECO:0007669"/>
    <property type="project" value="UniProtKB-KW"/>
</dbReference>
<dbReference type="GO" id="GO:0006351">
    <property type="term" value="P:DNA-templated transcription"/>
    <property type="evidence" value="ECO:0007669"/>
    <property type="project" value="InterPro"/>
</dbReference>
<dbReference type="GO" id="GO:0006508">
    <property type="term" value="P:proteolysis"/>
    <property type="evidence" value="ECO:0007669"/>
    <property type="project" value="UniProtKB-KW"/>
</dbReference>
<dbReference type="GO" id="GO:0039694">
    <property type="term" value="P:viral RNA genome replication"/>
    <property type="evidence" value="ECO:0007669"/>
    <property type="project" value="InterPro"/>
</dbReference>
<dbReference type="CDD" id="cd23194">
    <property type="entry name" value="Dicistroviridae_RdRp"/>
    <property type="match status" value="1"/>
</dbReference>
<dbReference type="Gene3D" id="1.20.960.20">
    <property type="match status" value="1"/>
</dbReference>
<dbReference type="Gene3D" id="3.30.70.270">
    <property type="match status" value="1"/>
</dbReference>
<dbReference type="Gene3D" id="2.40.10.10">
    <property type="entry name" value="Trypsin-like serine proteases"/>
    <property type="match status" value="1"/>
</dbReference>
<dbReference type="InterPro" id="IPR043502">
    <property type="entry name" value="DNA/RNA_pol_sf"/>
</dbReference>
<dbReference type="InterPro" id="IPR000605">
    <property type="entry name" value="Helicase_SF3_ssDNA/RNA_vir"/>
</dbReference>
<dbReference type="InterPro" id="IPR014759">
    <property type="entry name" value="Helicase_SF3_ssRNA_vir"/>
</dbReference>
<dbReference type="InterPro" id="IPR044067">
    <property type="entry name" value="PCV_3C_PRO"/>
</dbReference>
<dbReference type="InterPro" id="IPR024387">
    <property type="entry name" value="Pept_C3G_Picornavir"/>
</dbReference>
<dbReference type="InterPro" id="IPR009003">
    <property type="entry name" value="Peptidase_S1_PA"/>
</dbReference>
<dbReference type="InterPro" id="IPR043504">
    <property type="entry name" value="Peptidase_S1_PA_chymotrypsin"/>
</dbReference>
<dbReference type="InterPro" id="IPR043128">
    <property type="entry name" value="Rev_trsase/Diguanyl_cyclase"/>
</dbReference>
<dbReference type="InterPro" id="IPR001205">
    <property type="entry name" value="RNA-dir_pol_C"/>
</dbReference>
<dbReference type="InterPro" id="IPR007094">
    <property type="entry name" value="RNA-dir_pol_PSvirus"/>
</dbReference>
<dbReference type="Pfam" id="PF12381">
    <property type="entry name" value="Peptidase_C3G"/>
    <property type="match status" value="1"/>
</dbReference>
<dbReference type="Pfam" id="PF00680">
    <property type="entry name" value="RdRP_1"/>
    <property type="match status" value="1"/>
</dbReference>
<dbReference type="Pfam" id="PF00910">
    <property type="entry name" value="RNA_helicase"/>
    <property type="match status" value="1"/>
</dbReference>
<dbReference type="SUPFAM" id="SSF56672">
    <property type="entry name" value="DNA/RNA polymerases"/>
    <property type="match status" value="1"/>
</dbReference>
<dbReference type="SUPFAM" id="SSF50494">
    <property type="entry name" value="Trypsin-like serine proteases"/>
    <property type="match status" value="1"/>
</dbReference>
<dbReference type="PROSITE" id="PS51874">
    <property type="entry name" value="PCV_3C_PRO"/>
    <property type="match status" value="1"/>
</dbReference>
<dbReference type="PROSITE" id="PS50507">
    <property type="entry name" value="RDRP_SSRNA_POS"/>
    <property type="match status" value="1"/>
</dbReference>
<dbReference type="PROSITE" id="PS51218">
    <property type="entry name" value="SF3_HELICASE_2"/>
    <property type="match status" value="1"/>
</dbReference>